<dbReference type="EC" id="2.4.2.17" evidence="1"/>
<dbReference type="EMBL" id="CP000356">
    <property type="protein sequence ID" value="ABF53738.1"/>
    <property type="molecule type" value="Genomic_DNA"/>
</dbReference>
<dbReference type="SMR" id="Q1GRI4"/>
<dbReference type="STRING" id="317655.Sala_2027"/>
<dbReference type="KEGG" id="sal:Sala_2027"/>
<dbReference type="eggNOG" id="COG0040">
    <property type="taxonomic scope" value="Bacteria"/>
</dbReference>
<dbReference type="HOGENOM" id="CLU_038115_2_0_5"/>
<dbReference type="UniPathway" id="UPA00031">
    <property type="reaction ID" value="UER00006"/>
</dbReference>
<dbReference type="Proteomes" id="UP000006578">
    <property type="component" value="Chromosome"/>
</dbReference>
<dbReference type="GO" id="GO:0005737">
    <property type="term" value="C:cytoplasm"/>
    <property type="evidence" value="ECO:0007669"/>
    <property type="project" value="UniProtKB-SubCell"/>
</dbReference>
<dbReference type="GO" id="GO:0005524">
    <property type="term" value="F:ATP binding"/>
    <property type="evidence" value="ECO:0007669"/>
    <property type="project" value="UniProtKB-KW"/>
</dbReference>
<dbReference type="GO" id="GO:0003879">
    <property type="term" value="F:ATP phosphoribosyltransferase activity"/>
    <property type="evidence" value="ECO:0007669"/>
    <property type="project" value="UniProtKB-UniRule"/>
</dbReference>
<dbReference type="GO" id="GO:0000105">
    <property type="term" value="P:L-histidine biosynthetic process"/>
    <property type="evidence" value="ECO:0007669"/>
    <property type="project" value="UniProtKB-UniRule"/>
</dbReference>
<dbReference type="CDD" id="cd13595">
    <property type="entry name" value="PBP2_HisGs"/>
    <property type="match status" value="1"/>
</dbReference>
<dbReference type="Gene3D" id="3.40.190.10">
    <property type="entry name" value="Periplasmic binding protein-like II"/>
    <property type="match status" value="2"/>
</dbReference>
<dbReference type="HAMAP" id="MF_01018">
    <property type="entry name" value="HisG_Short"/>
    <property type="match status" value="1"/>
</dbReference>
<dbReference type="InterPro" id="IPR013820">
    <property type="entry name" value="ATP_PRibTrfase_cat"/>
</dbReference>
<dbReference type="InterPro" id="IPR018198">
    <property type="entry name" value="ATP_PRibTrfase_CS"/>
</dbReference>
<dbReference type="InterPro" id="IPR001348">
    <property type="entry name" value="ATP_PRibTrfase_HisG"/>
</dbReference>
<dbReference type="InterPro" id="IPR024893">
    <property type="entry name" value="ATP_PRibTrfase_HisG_short"/>
</dbReference>
<dbReference type="NCBIfam" id="TIGR00070">
    <property type="entry name" value="hisG"/>
    <property type="match status" value="1"/>
</dbReference>
<dbReference type="PANTHER" id="PTHR21403:SF8">
    <property type="entry name" value="ATP PHOSPHORIBOSYLTRANSFERASE"/>
    <property type="match status" value="1"/>
</dbReference>
<dbReference type="PANTHER" id="PTHR21403">
    <property type="entry name" value="ATP PHOSPHORIBOSYLTRANSFERASE ATP-PRTASE"/>
    <property type="match status" value="1"/>
</dbReference>
<dbReference type="Pfam" id="PF01634">
    <property type="entry name" value="HisG"/>
    <property type="match status" value="1"/>
</dbReference>
<dbReference type="SUPFAM" id="SSF53850">
    <property type="entry name" value="Periplasmic binding protein-like II"/>
    <property type="match status" value="1"/>
</dbReference>
<dbReference type="PROSITE" id="PS01316">
    <property type="entry name" value="ATP_P_PHORIBOSYLTR"/>
    <property type="match status" value="1"/>
</dbReference>
<gene>
    <name evidence="1" type="primary">hisG</name>
    <name type="ordered locus">Sala_2027</name>
</gene>
<name>HIS1_SPHAL</name>
<sequence length="223" mass="23724">MCATLMPEPIIFAIPKGRILDEALPLLARVGIEPAADFFDKKSRALVFGTNQSHISLIRVRAFDVATFVAHGAAQLGIVGSDVVDEFDYSELYAPVDLGIGHCRLSLAGPEGGAPPGLGESHIRVATKYPATTRRWFAAQGIQAECIKLNGAMEIAPKLGLASHIVDLVSTGRTLVENALAEQKIISEVSARLIVNRAAFKLNSAEVPALVERFRQAVGDAAA</sequence>
<feature type="chain" id="PRO_0000319533" description="ATP phosphoribosyltransferase">
    <location>
        <begin position="1"/>
        <end position="223"/>
    </location>
</feature>
<protein>
    <recommendedName>
        <fullName evidence="1">ATP phosphoribosyltransferase</fullName>
        <shortName evidence="1">ATP-PRT</shortName>
        <shortName evidence="1">ATP-PRTase</shortName>
        <ecNumber evidence="1">2.4.2.17</ecNumber>
    </recommendedName>
</protein>
<accession>Q1GRI4</accession>
<proteinExistence type="inferred from homology"/>
<organism>
    <name type="scientific">Sphingopyxis alaskensis (strain DSM 13593 / LMG 18877 / RB2256)</name>
    <name type="common">Sphingomonas alaskensis</name>
    <dbReference type="NCBI Taxonomy" id="317655"/>
    <lineage>
        <taxon>Bacteria</taxon>
        <taxon>Pseudomonadati</taxon>
        <taxon>Pseudomonadota</taxon>
        <taxon>Alphaproteobacteria</taxon>
        <taxon>Sphingomonadales</taxon>
        <taxon>Sphingomonadaceae</taxon>
        <taxon>Sphingopyxis</taxon>
    </lineage>
</organism>
<evidence type="ECO:0000255" key="1">
    <source>
        <dbReference type="HAMAP-Rule" id="MF_01018"/>
    </source>
</evidence>
<reference key="1">
    <citation type="journal article" date="2009" name="Proc. Natl. Acad. Sci. U.S.A.">
        <title>The genomic basis of trophic strategy in marine bacteria.</title>
        <authorList>
            <person name="Lauro F.M."/>
            <person name="McDougald D."/>
            <person name="Thomas T."/>
            <person name="Williams T.J."/>
            <person name="Egan S."/>
            <person name="Rice S."/>
            <person name="DeMaere M.Z."/>
            <person name="Ting L."/>
            <person name="Ertan H."/>
            <person name="Johnson J."/>
            <person name="Ferriera S."/>
            <person name="Lapidus A."/>
            <person name="Anderson I."/>
            <person name="Kyrpides N."/>
            <person name="Munk A.C."/>
            <person name="Detter C."/>
            <person name="Han C.S."/>
            <person name="Brown M.V."/>
            <person name="Robb F.T."/>
            <person name="Kjelleberg S."/>
            <person name="Cavicchioli R."/>
        </authorList>
    </citation>
    <scope>NUCLEOTIDE SEQUENCE [LARGE SCALE GENOMIC DNA]</scope>
    <source>
        <strain>DSM 13593 / LMG 18877 / RB2256</strain>
    </source>
</reference>
<comment type="function">
    <text evidence="1">Catalyzes the condensation of ATP and 5-phosphoribose 1-diphosphate to form N'-(5'-phosphoribosyl)-ATP (PR-ATP). Has a crucial role in the pathway because the rate of histidine biosynthesis seems to be controlled primarily by regulation of HisG enzymatic activity.</text>
</comment>
<comment type="catalytic activity">
    <reaction evidence="1">
        <text>1-(5-phospho-beta-D-ribosyl)-ATP + diphosphate = 5-phospho-alpha-D-ribose 1-diphosphate + ATP</text>
        <dbReference type="Rhea" id="RHEA:18473"/>
        <dbReference type="ChEBI" id="CHEBI:30616"/>
        <dbReference type="ChEBI" id="CHEBI:33019"/>
        <dbReference type="ChEBI" id="CHEBI:58017"/>
        <dbReference type="ChEBI" id="CHEBI:73183"/>
        <dbReference type="EC" id="2.4.2.17"/>
    </reaction>
</comment>
<comment type="pathway">
    <text evidence="1">Amino-acid biosynthesis; L-histidine biosynthesis; L-histidine from 5-phospho-alpha-D-ribose 1-diphosphate: step 1/9.</text>
</comment>
<comment type="subunit">
    <text evidence="1">Heteromultimer composed of HisG and HisZ subunits.</text>
</comment>
<comment type="subcellular location">
    <subcellularLocation>
        <location evidence="1">Cytoplasm</location>
    </subcellularLocation>
</comment>
<comment type="domain">
    <text>Lacks the C-terminal regulatory region which is replaced by HisZ.</text>
</comment>
<comment type="similarity">
    <text evidence="1">Belongs to the ATP phosphoribosyltransferase family. Short subfamily.</text>
</comment>
<keyword id="KW-0028">Amino-acid biosynthesis</keyword>
<keyword id="KW-0067">ATP-binding</keyword>
<keyword id="KW-0963">Cytoplasm</keyword>
<keyword id="KW-0328">Glycosyltransferase</keyword>
<keyword id="KW-0368">Histidine biosynthesis</keyword>
<keyword id="KW-0547">Nucleotide-binding</keyword>
<keyword id="KW-1185">Reference proteome</keyword>
<keyword id="KW-0808">Transferase</keyword>